<name>SLRA_DICDI</name>
<dbReference type="EMBL" id="AAFI02000044">
    <property type="protein sequence ID" value="EAL66456.1"/>
    <property type="molecule type" value="Genomic_DNA"/>
</dbReference>
<dbReference type="RefSeq" id="XP_640377.1">
    <property type="nucleotide sequence ID" value="XM_635285.1"/>
</dbReference>
<dbReference type="SMR" id="Q54T74"/>
<dbReference type="FunCoup" id="Q54T74">
    <property type="interactions" value="363"/>
</dbReference>
<dbReference type="STRING" id="44689.Q54T74"/>
<dbReference type="GlyCosmos" id="Q54T74">
    <property type="glycosylation" value="34 sites, No reported glycans"/>
</dbReference>
<dbReference type="GlyGen" id="Q54T74">
    <property type="glycosylation" value="34 sites"/>
</dbReference>
<dbReference type="PaxDb" id="44689-DDB0232377"/>
<dbReference type="EnsemblProtists" id="EAL66456">
    <property type="protein sequence ID" value="EAL66456"/>
    <property type="gene ID" value="DDB_G0282069"/>
</dbReference>
<dbReference type="GeneID" id="8623330"/>
<dbReference type="KEGG" id="ddi:DDB_G0282069"/>
<dbReference type="dictyBase" id="DDB_G0282069">
    <property type="gene designation" value="slrA"/>
</dbReference>
<dbReference type="VEuPathDB" id="AmoebaDB:DDB_G0282069"/>
<dbReference type="eggNOG" id="ENOG502RSTU">
    <property type="taxonomic scope" value="Eukaryota"/>
</dbReference>
<dbReference type="HOGENOM" id="CLU_255817_0_0_1"/>
<dbReference type="InParanoid" id="Q54T74"/>
<dbReference type="OMA" id="CECYPNL"/>
<dbReference type="PRO" id="PR:Q54T74"/>
<dbReference type="Proteomes" id="UP000002195">
    <property type="component" value="Chromosome 3"/>
</dbReference>
<dbReference type="GO" id="GO:0005737">
    <property type="term" value="C:cytoplasm"/>
    <property type="evidence" value="ECO:0000318"/>
    <property type="project" value="GO_Central"/>
</dbReference>
<dbReference type="GO" id="GO:0016020">
    <property type="term" value="C:membrane"/>
    <property type="evidence" value="ECO:0007669"/>
    <property type="project" value="UniProtKB-SubCell"/>
</dbReference>
<dbReference type="Gene3D" id="3.80.10.10">
    <property type="entry name" value="Ribonuclease Inhibitor"/>
    <property type="match status" value="2"/>
</dbReference>
<dbReference type="InterPro" id="IPR001611">
    <property type="entry name" value="Leu-rich_rpt"/>
</dbReference>
<dbReference type="InterPro" id="IPR032675">
    <property type="entry name" value="LRR_dom_sf"/>
</dbReference>
<dbReference type="InterPro" id="IPR051809">
    <property type="entry name" value="Plant_receptor-like_S/T_kinase"/>
</dbReference>
<dbReference type="PANTHER" id="PTHR27008">
    <property type="entry name" value="OS04G0122200 PROTEIN"/>
    <property type="match status" value="1"/>
</dbReference>
<dbReference type="PANTHER" id="PTHR27008:SF497">
    <property type="entry name" value="OS11G0695000 PROTEIN"/>
    <property type="match status" value="1"/>
</dbReference>
<dbReference type="SUPFAM" id="SSF52058">
    <property type="entry name" value="L domain-like"/>
    <property type="match status" value="1"/>
</dbReference>
<dbReference type="PROSITE" id="PS51450">
    <property type="entry name" value="LRR"/>
    <property type="match status" value="6"/>
</dbReference>
<protein>
    <recommendedName>
        <fullName>S-cell enriched with leucine-rich repeat-containing protein slrA</fullName>
    </recommendedName>
</protein>
<evidence type="ECO:0000255" key="1"/>
<evidence type="ECO:0000256" key="2">
    <source>
        <dbReference type="SAM" id="MobiDB-lite"/>
    </source>
</evidence>
<evidence type="ECO:0000269" key="3">
    <source>
    </source>
</evidence>
<evidence type="ECO:0000305" key="4"/>
<keyword id="KW-0175">Coiled coil</keyword>
<keyword id="KW-0325">Glycoprotein</keyword>
<keyword id="KW-0433">Leucine-rich repeat</keyword>
<keyword id="KW-0472">Membrane</keyword>
<keyword id="KW-1185">Reference proteome</keyword>
<keyword id="KW-0677">Repeat</keyword>
<keyword id="KW-0812">Transmembrane</keyword>
<keyword id="KW-1133">Transmembrane helix</keyword>
<accession>Q54T74</accession>
<reference key="1">
    <citation type="journal article" date="2005" name="Nature">
        <title>The genome of the social amoeba Dictyostelium discoideum.</title>
        <authorList>
            <person name="Eichinger L."/>
            <person name="Pachebat J.A."/>
            <person name="Gloeckner G."/>
            <person name="Rajandream M.A."/>
            <person name="Sucgang R."/>
            <person name="Berriman M."/>
            <person name="Song J."/>
            <person name="Olsen R."/>
            <person name="Szafranski K."/>
            <person name="Xu Q."/>
            <person name="Tunggal B."/>
            <person name="Kummerfeld S."/>
            <person name="Madera M."/>
            <person name="Konfortov B.A."/>
            <person name="Rivero F."/>
            <person name="Bankier A.T."/>
            <person name="Lehmann R."/>
            <person name="Hamlin N."/>
            <person name="Davies R."/>
            <person name="Gaudet P."/>
            <person name="Fey P."/>
            <person name="Pilcher K."/>
            <person name="Chen G."/>
            <person name="Saunders D."/>
            <person name="Sodergren E.J."/>
            <person name="Davis P."/>
            <person name="Kerhornou A."/>
            <person name="Nie X."/>
            <person name="Hall N."/>
            <person name="Anjard C."/>
            <person name="Hemphill L."/>
            <person name="Bason N."/>
            <person name="Farbrother P."/>
            <person name="Desany B."/>
            <person name="Just E."/>
            <person name="Morio T."/>
            <person name="Rost R."/>
            <person name="Churcher C.M."/>
            <person name="Cooper J."/>
            <person name="Haydock S."/>
            <person name="van Driessche N."/>
            <person name="Cronin A."/>
            <person name="Goodhead I."/>
            <person name="Muzny D.M."/>
            <person name="Mourier T."/>
            <person name="Pain A."/>
            <person name="Lu M."/>
            <person name="Harper D."/>
            <person name="Lindsay R."/>
            <person name="Hauser H."/>
            <person name="James K.D."/>
            <person name="Quiles M."/>
            <person name="Madan Babu M."/>
            <person name="Saito T."/>
            <person name="Buchrieser C."/>
            <person name="Wardroper A."/>
            <person name="Felder M."/>
            <person name="Thangavelu M."/>
            <person name="Johnson D."/>
            <person name="Knights A."/>
            <person name="Loulseged H."/>
            <person name="Mungall K.L."/>
            <person name="Oliver K."/>
            <person name="Price C."/>
            <person name="Quail M.A."/>
            <person name="Urushihara H."/>
            <person name="Hernandez J."/>
            <person name="Rabbinowitsch E."/>
            <person name="Steffen D."/>
            <person name="Sanders M."/>
            <person name="Ma J."/>
            <person name="Kohara Y."/>
            <person name="Sharp S."/>
            <person name="Simmonds M.N."/>
            <person name="Spiegler S."/>
            <person name="Tivey A."/>
            <person name="Sugano S."/>
            <person name="White B."/>
            <person name="Walker D."/>
            <person name="Woodward J.R."/>
            <person name="Winckler T."/>
            <person name="Tanaka Y."/>
            <person name="Shaulsky G."/>
            <person name="Schleicher M."/>
            <person name="Weinstock G.M."/>
            <person name="Rosenthal A."/>
            <person name="Cox E.C."/>
            <person name="Chisholm R.L."/>
            <person name="Gibbs R.A."/>
            <person name="Loomis W.F."/>
            <person name="Platzer M."/>
            <person name="Kay R.R."/>
            <person name="Williams J.G."/>
            <person name="Dear P.H."/>
            <person name="Noegel A.A."/>
            <person name="Barrell B.G."/>
            <person name="Kuspa A."/>
        </authorList>
    </citation>
    <scope>NUCLEOTIDE SEQUENCE [LARGE SCALE GENOMIC DNA]</scope>
    <source>
        <strain>AX4</strain>
    </source>
</reference>
<reference key="2">
    <citation type="journal article" date="2007" name="Science">
        <title>Immune-like phagocyte activity in the social amoeba.</title>
        <authorList>
            <person name="Chen G."/>
            <person name="Zhuchenko O."/>
            <person name="Kuspa A."/>
        </authorList>
    </citation>
    <scope>DEVELOPMENTAL STAGE</scope>
</reference>
<feature type="chain" id="PRO_0000391769" description="S-cell enriched with leucine-rich repeat-containing protein slrA">
    <location>
        <begin position="1"/>
        <end position="1378"/>
    </location>
</feature>
<feature type="transmembrane region" description="Helical" evidence="1">
    <location>
        <begin position="17"/>
        <end position="37"/>
    </location>
</feature>
<feature type="transmembrane region" description="Helical" evidence="1">
    <location>
        <begin position="1160"/>
        <end position="1180"/>
    </location>
</feature>
<feature type="repeat" description="LRR 1">
    <location>
        <begin position="143"/>
        <end position="165"/>
    </location>
</feature>
<feature type="repeat" description="LRR 2">
    <location>
        <begin position="167"/>
        <end position="188"/>
    </location>
</feature>
<feature type="repeat" description="LRR 3">
    <location>
        <begin position="191"/>
        <end position="212"/>
    </location>
</feature>
<feature type="repeat" description="LRR 4">
    <location>
        <begin position="213"/>
        <end position="235"/>
    </location>
</feature>
<feature type="repeat" description="LRR 5">
    <location>
        <begin position="236"/>
        <end position="257"/>
    </location>
</feature>
<feature type="repeat" description="LRR 6">
    <location>
        <begin position="260"/>
        <end position="281"/>
    </location>
</feature>
<feature type="repeat" description="LRR 7">
    <location>
        <begin position="282"/>
        <end position="304"/>
    </location>
</feature>
<feature type="repeat" description="LRR 8">
    <location>
        <begin position="307"/>
        <end position="329"/>
    </location>
</feature>
<feature type="repeat" description="LRR 9">
    <location>
        <begin position="331"/>
        <end position="353"/>
    </location>
</feature>
<feature type="region of interest" description="Disordered" evidence="2">
    <location>
        <begin position="891"/>
        <end position="945"/>
    </location>
</feature>
<feature type="region of interest" description="Disordered" evidence="2">
    <location>
        <begin position="1227"/>
        <end position="1378"/>
    </location>
</feature>
<feature type="coiled-coil region" evidence="1">
    <location>
        <begin position="886"/>
        <end position="946"/>
    </location>
</feature>
<feature type="compositionally biased region" description="Low complexity" evidence="2">
    <location>
        <begin position="891"/>
        <end position="909"/>
    </location>
</feature>
<feature type="compositionally biased region" description="Acidic residues" evidence="2">
    <location>
        <begin position="915"/>
        <end position="924"/>
    </location>
</feature>
<feature type="compositionally biased region" description="Low complexity" evidence="2">
    <location>
        <begin position="929"/>
        <end position="945"/>
    </location>
</feature>
<feature type="compositionally biased region" description="Low complexity" evidence="2">
    <location>
        <begin position="1227"/>
        <end position="1276"/>
    </location>
</feature>
<feature type="compositionally biased region" description="Basic and acidic residues" evidence="2">
    <location>
        <begin position="1289"/>
        <end position="1304"/>
    </location>
</feature>
<feature type="compositionally biased region" description="Acidic residues" evidence="2">
    <location>
        <begin position="1305"/>
        <end position="1324"/>
    </location>
</feature>
<feature type="compositionally biased region" description="Low complexity" evidence="2">
    <location>
        <begin position="1328"/>
        <end position="1353"/>
    </location>
</feature>
<feature type="compositionally biased region" description="Polar residues" evidence="2">
    <location>
        <begin position="1354"/>
        <end position="1364"/>
    </location>
</feature>
<feature type="compositionally biased region" description="Basic residues" evidence="2">
    <location>
        <begin position="1368"/>
        <end position="1378"/>
    </location>
</feature>
<feature type="glycosylation site" description="N-linked (GlcNAc...) asparagine" evidence="1">
    <location>
        <position position="59"/>
    </location>
</feature>
<feature type="glycosylation site" description="N-linked (GlcNAc...) asparagine" evidence="1">
    <location>
        <position position="112"/>
    </location>
</feature>
<feature type="glycosylation site" description="N-linked (GlcNAc...) asparagine" evidence="1">
    <location>
        <position position="143"/>
    </location>
</feature>
<feature type="glycosylation site" description="N-linked (GlcNAc...) asparagine" evidence="1">
    <location>
        <position position="172"/>
    </location>
</feature>
<feature type="glycosylation site" description="N-linked (GlcNAc...) asparagine" evidence="1">
    <location>
        <position position="201"/>
    </location>
</feature>
<feature type="glycosylation site" description="N-linked (GlcNAc...) asparagine" evidence="1">
    <location>
        <position position="265"/>
    </location>
</feature>
<feature type="glycosylation site" description="N-linked (GlcNAc...) asparagine" evidence="1">
    <location>
        <position position="287"/>
    </location>
</feature>
<feature type="glycosylation site" description="N-linked (GlcNAc...) asparagine" evidence="1">
    <location>
        <position position="296"/>
    </location>
</feature>
<feature type="glycosylation site" description="N-linked (GlcNAc...) asparagine" evidence="1">
    <location>
        <position position="416"/>
    </location>
</feature>
<feature type="glycosylation site" description="N-linked (GlcNAc...) asparagine" evidence="1">
    <location>
        <position position="436"/>
    </location>
</feature>
<feature type="glycosylation site" description="N-linked (GlcNAc...) asparagine" evidence="1">
    <location>
        <position position="451"/>
    </location>
</feature>
<feature type="glycosylation site" description="N-linked (GlcNAc...) asparagine" evidence="1">
    <location>
        <position position="491"/>
    </location>
</feature>
<feature type="glycosylation site" description="N-linked (GlcNAc...) asparagine" evidence="1">
    <location>
        <position position="513"/>
    </location>
</feature>
<feature type="glycosylation site" description="N-linked (GlcNAc...) asparagine" evidence="1">
    <location>
        <position position="596"/>
    </location>
</feature>
<feature type="glycosylation site" description="N-linked (GlcNAc...) asparagine" evidence="1">
    <location>
        <position position="605"/>
    </location>
</feature>
<feature type="glycosylation site" description="N-linked (GlcNAc...) asparagine" evidence="1">
    <location>
        <position position="634"/>
    </location>
</feature>
<feature type="glycosylation site" description="N-linked (GlcNAc...) asparagine" evidence="1">
    <location>
        <position position="704"/>
    </location>
</feature>
<feature type="glycosylation site" description="N-linked (GlcNAc...) asparagine" evidence="1">
    <location>
        <position position="710"/>
    </location>
</feature>
<feature type="glycosylation site" description="N-linked (GlcNAc...) asparagine" evidence="1">
    <location>
        <position position="740"/>
    </location>
</feature>
<feature type="glycosylation site" description="N-linked (GlcNAc...) asparagine" evidence="1">
    <location>
        <position position="741"/>
    </location>
</feature>
<feature type="glycosylation site" description="N-linked (GlcNAc...) asparagine" evidence="1">
    <location>
        <position position="771"/>
    </location>
</feature>
<feature type="glycosylation site" description="N-linked (GlcNAc...) asparagine" evidence="1">
    <location>
        <position position="788"/>
    </location>
</feature>
<feature type="glycosylation site" description="N-linked (GlcNAc...) asparagine" evidence="1">
    <location>
        <position position="801"/>
    </location>
</feature>
<feature type="glycosylation site" description="N-linked (GlcNAc...) asparagine" evidence="1">
    <location>
        <position position="826"/>
    </location>
</feature>
<feature type="glycosylation site" description="N-linked (GlcNAc...) asparagine" evidence="1">
    <location>
        <position position="843"/>
    </location>
</feature>
<feature type="glycosylation site" description="N-linked (GlcNAc...) asparagine" evidence="1">
    <location>
        <position position="861"/>
    </location>
</feature>
<feature type="glycosylation site" description="N-linked (GlcNAc...) asparagine" evidence="1">
    <location>
        <position position="875"/>
    </location>
</feature>
<feature type="glycosylation site" description="N-linked (GlcNAc...) asparagine" evidence="1">
    <location>
        <position position="907"/>
    </location>
</feature>
<feature type="glycosylation site" description="N-linked (GlcNAc...) asparagine" evidence="1">
    <location>
        <position position="953"/>
    </location>
</feature>
<feature type="glycosylation site" description="N-linked (GlcNAc...) asparagine" evidence="1">
    <location>
        <position position="970"/>
    </location>
</feature>
<feature type="glycosylation site" description="N-linked (GlcNAc...) asparagine" evidence="1">
    <location>
        <position position="1090"/>
    </location>
</feature>
<feature type="glycosylation site" description="N-linked (GlcNAc...) asparagine" evidence="1">
    <location>
        <position position="1100"/>
    </location>
</feature>
<feature type="glycosylation site" description="N-linked (GlcNAc...) asparagine" evidence="1">
    <location>
        <position position="1331"/>
    </location>
</feature>
<feature type="glycosylation site" description="N-linked (GlcNAc...) asparagine" evidence="1">
    <location>
        <position position="1360"/>
    </location>
</feature>
<sequence>MVKNQIFSLKSLWSSSIFKILYCYLFTSLLLILSTWVSVNDGLSVREHIILLRLYFDTNGTTWYHNQGWKEYADCILAADGSVRKALESIDPLTGQIPQYLWADHFSQLDNNKTLYKIIHNQIQGHKVVICNAFGITCEDRINLTGIDLSNNNLKGNITPYLPYLLHLRNLNLSNNHLSGCFPDGLLKAQSLVALDLSYNNISCTLSLADSKAISYIDISHNHLTGYFKNVWKTPNLLFLDLSFNKLYGTILKEFFRQKSLDYVNLSSNQLIGFLPILSKSRISYLNISNNRLIGNITLLTCWKAGSLRIFDAENNMFEGALPESIFDHSPLQYVNLKGNIVKDPLPSILDCAKSEVKIIVPDGLKQNKCDPKVSSNWVLILNPLGEEFNIVGSDFGINSKSINIQFQNGLHCVDNVTTIIKSNTIISCKNPQGRNSTYLKLTIPTGEPGNFTVIKQQLYYYRPIIKSCSKVYKNIGGEITILGSHLESFNKTSNGKKMITVSIGNIKNSFTNVTSSINSDGFSGEVISCRNADIITPDMITCSIPSNTNLQQPAEIQIIIDGITAYVPIDSTRPHFLYKGVYNKDITISKPTEYNQTITISVPNETIIDMDQVVRVLIDDNDDSICKNIQHINKTSIQCLPYSETCGSNVKVTLVTKYGEPQFTTSLNYPPPIITRVTQGIDSTSNSIITINGKFLKTGGKRNLSIKINDTICCPLYNEYYYKQDELDDDNNNNNNNNNNSTTDINNNNNIIKNNNLIKEEQILCYYQINQSLPIHLNLPVTLTLSNQTVVKNNIYSQTNSTCPNNCVKHRTNGCRSGICECYPNLTGPSCDENIPESTISNFSNYLPDFILSFPKFITNNTFNIKFLSISEVNESGNIVDRFCSLNNNNNNNNNNNNKNNNNNNNDSNNEKEVVEDEEEDLDYSSQNDNNNINNNNNENNNENKLNWKLINQTKTTNALYTLKIKKKNVTLDILISSDNNQHREVYFAGEVIQVPKSSIELIVNLKGKWLFKDPKNQLKFNFLVKPVNDHDYSLCLPSPFVLISDEPFRWITMDVDSSTIFAKPSNRFLLNNYLVRVIEPNYKLSDSNLTLNLYYQFNQTTLKQQDNHGDDNSDNSIKYTEDSLKFRIDFSTFNSRREINPKPRGCFKDNTHKFPYDYYIVFFGCASGLILVLVICIVQCSRIESRQRKQIIKSFKATQKMPVEIKTPLLPPSFHFNFLDYNNMDLNNNNNNNNNNNNNNNNNNNNNNNNNNNNNNNNNFNDGSDTFNNNNKKNLNYEDNCDTVGFDGKENDIKNINNKKDEKEDDGDDDDDEDDDEYEDDTQPCSSGNSSRSKGSDGGSSSNSLSSDKQSFNNGNENNSIIPENKKKHLTIINKK</sequence>
<gene>
    <name type="primary">slrA</name>
    <name type="ORF">DDB_G0282069</name>
</gene>
<organism>
    <name type="scientific">Dictyostelium discoideum</name>
    <name type="common">Social amoeba</name>
    <dbReference type="NCBI Taxonomy" id="44689"/>
    <lineage>
        <taxon>Eukaryota</taxon>
        <taxon>Amoebozoa</taxon>
        <taxon>Evosea</taxon>
        <taxon>Eumycetozoa</taxon>
        <taxon>Dictyostelia</taxon>
        <taxon>Dictyosteliales</taxon>
        <taxon>Dictyosteliaceae</taxon>
        <taxon>Dictyostelium</taxon>
    </lineage>
</organism>
<proteinExistence type="evidence at transcript level"/>
<comment type="subcellular location">
    <subcellularLocation>
        <location evidence="4">Membrane</location>
        <topology evidence="4">Multi-pass membrane protein</topology>
    </subcellularLocation>
</comment>
<comment type="developmental stage">
    <text evidence="3">Only expressed in sentinel 'S-cells'.</text>
</comment>